<reference key="1">
    <citation type="submission" date="2006-01" db="EMBL/GenBank/DDBJ databases">
        <title>Complete sequence of Novosphingobium aromaticivorans DSM 12444.</title>
        <authorList>
            <consortium name="US DOE Joint Genome Institute"/>
            <person name="Copeland A."/>
            <person name="Lucas S."/>
            <person name="Lapidus A."/>
            <person name="Barry K."/>
            <person name="Detter J.C."/>
            <person name="Glavina T."/>
            <person name="Hammon N."/>
            <person name="Israni S."/>
            <person name="Pitluck S."/>
            <person name="Chain P."/>
            <person name="Malfatti S."/>
            <person name="Shin M."/>
            <person name="Vergez L."/>
            <person name="Schmutz J."/>
            <person name="Larimer F."/>
            <person name="Land M."/>
            <person name="Kyrpides N."/>
            <person name="Ivanova N."/>
            <person name="Fredrickson J."/>
            <person name="Balkwill D."/>
            <person name="Romine M.F."/>
            <person name="Richardson P."/>
        </authorList>
    </citation>
    <scope>NUCLEOTIDE SEQUENCE [LARGE SCALE GENOMIC DNA]</scope>
    <source>
        <strain>ATCC 700278 / DSM 12444 / CCUG 56034 / CIP 105152 / NBRC 16084 / F199</strain>
    </source>
</reference>
<proteinExistence type="inferred from homology"/>
<comment type="similarity">
    <text evidence="1">Belongs to the UPF0301 (AlgH) family.</text>
</comment>
<keyword id="KW-1185">Reference proteome</keyword>
<evidence type="ECO:0000255" key="1">
    <source>
        <dbReference type="HAMAP-Rule" id="MF_00758"/>
    </source>
</evidence>
<protein>
    <recommendedName>
        <fullName evidence="1">UPF0301 protein Saro_0683</fullName>
    </recommendedName>
</protein>
<feature type="chain" id="PRO_0000258850" description="UPF0301 protein Saro_0683">
    <location>
        <begin position="1"/>
        <end position="186"/>
    </location>
</feature>
<gene>
    <name type="ordered locus">Saro_0683</name>
</gene>
<organism>
    <name type="scientific">Novosphingobium aromaticivorans (strain ATCC 700278 / DSM 12444 / CCUG 56034 / CIP 105152 / NBRC 16084 / F199)</name>
    <dbReference type="NCBI Taxonomy" id="279238"/>
    <lineage>
        <taxon>Bacteria</taxon>
        <taxon>Pseudomonadati</taxon>
        <taxon>Pseudomonadota</taxon>
        <taxon>Alphaproteobacteria</taxon>
        <taxon>Sphingomonadales</taxon>
        <taxon>Sphingomonadaceae</taxon>
        <taxon>Novosphingobium</taxon>
    </lineage>
</organism>
<name>Y683_NOVAD</name>
<accession>Q2GAJ3</accession>
<sequence>MSEAEYLGGRLLLAMPGMGDPRFDHAVIAMCVHDEHGALGIGVGHVREGITLHGLLEDVGIDPGLAPDMPVLNGGPVETARGFVLHSDDWGGEGSVTVNGLCCLSASLDILRAIAEGRGPSRFVIALGYAGWGGGQLEGEMRRHGWYAAQGRPEILFETPTGRRWTQAWKREGIDPAHLVGQTGSA</sequence>
<dbReference type="EMBL" id="CP000248">
    <property type="protein sequence ID" value="ABD25130.1"/>
    <property type="molecule type" value="Genomic_DNA"/>
</dbReference>
<dbReference type="RefSeq" id="WP_011444344.1">
    <property type="nucleotide sequence ID" value="NC_007794.1"/>
</dbReference>
<dbReference type="SMR" id="Q2GAJ3"/>
<dbReference type="STRING" id="279238.Saro_0683"/>
<dbReference type="KEGG" id="nar:Saro_0683"/>
<dbReference type="eggNOG" id="COG1678">
    <property type="taxonomic scope" value="Bacteria"/>
</dbReference>
<dbReference type="HOGENOM" id="CLU_057596_1_0_5"/>
<dbReference type="Proteomes" id="UP000009134">
    <property type="component" value="Chromosome"/>
</dbReference>
<dbReference type="GO" id="GO:0005829">
    <property type="term" value="C:cytosol"/>
    <property type="evidence" value="ECO:0007669"/>
    <property type="project" value="TreeGrafter"/>
</dbReference>
<dbReference type="Gene3D" id="3.40.1740.10">
    <property type="entry name" value="VC0467-like"/>
    <property type="match status" value="1"/>
</dbReference>
<dbReference type="HAMAP" id="MF_00758">
    <property type="entry name" value="UPF0301"/>
    <property type="match status" value="1"/>
</dbReference>
<dbReference type="InterPro" id="IPR003774">
    <property type="entry name" value="AlgH-like"/>
</dbReference>
<dbReference type="PANTHER" id="PTHR30327">
    <property type="entry name" value="UNCHARACTERIZED PROTEIN YQGE"/>
    <property type="match status" value="1"/>
</dbReference>
<dbReference type="PANTHER" id="PTHR30327:SF1">
    <property type="entry name" value="UPF0301 PROTEIN YQGE"/>
    <property type="match status" value="1"/>
</dbReference>
<dbReference type="Pfam" id="PF02622">
    <property type="entry name" value="DUF179"/>
    <property type="match status" value="1"/>
</dbReference>
<dbReference type="SUPFAM" id="SSF143456">
    <property type="entry name" value="VC0467-like"/>
    <property type="match status" value="1"/>
</dbReference>